<comment type="function">
    <text evidence="1 2">Mediates influx of magnesium ions (By similarity). Alternates between open and closed states. Activated by low cytoplasmic Mg(2+) levels. Inactive when cytoplasmic Mg(2+) levels are high (By similarity).</text>
</comment>
<comment type="catalytic activity">
    <reaction evidence="1">
        <text>Mg(2+)(in) = Mg(2+)(out)</text>
        <dbReference type="Rhea" id="RHEA:29827"/>
        <dbReference type="ChEBI" id="CHEBI:18420"/>
    </reaction>
</comment>
<comment type="subunit">
    <text evidence="2">Homopentamer. In the absence of Mg(2+), interactions between subunits are weakened, and dimers, trimers and tetramers can be observed in vitro (By similarity).</text>
</comment>
<comment type="subcellular location">
    <subcellularLocation>
        <location evidence="1">Cell inner membrane</location>
        <topology evidence="2">Multi-pass membrane protein</topology>
    </subcellularLocation>
</comment>
<comment type="domain">
    <text evidence="2">The central ion permeation pathway is formed by the first transmembrane domain from each of the five subunits. Mg(2+) binding strengthens interactions between subunits and leads to the formation of a symmetrical homopentamer surrounding a closed ion permeation pathway. Low Mg(2+) concentrations trigger both a conformation change within each subunit and a loosening of the interactions between subunits. This results in an open ion conduction pathway. In addition, this results in a less symmetrical shape of the whole complex.</text>
</comment>
<comment type="similarity">
    <text evidence="4">Belongs to the CorA metal ion transporter (MIT) (TC 1.A.35) family.</text>
</comment>
<dbReference type="EMBL" id="CP000057">
    <property type="protein sequence ID" value="AAX88051.1"/>
    <property type="molecule type" value="Genomic_DNA"/>
</dbReference>
<dbReference type="RefSeq" id="WP_005655990.1">
    <property type="nucleotide sequence ID" value="NC_007146.2"/>
</dbReference>
<dbReference type="SMR" id="Q4QLP6"/>
<dbReference type="GeneID" id="93220050"/>
<dbReference type="KEGG" id="hit:NTHI1195"/>
<dbReference type="HOGENOM" id="CLU_007127_5_0_6"/>
<dbReference type="Proteomes" id="UP000002525">
    <property type="component" value="Chromosome"/>
</dbReference>
<dbReference type="GO" id="GO:0005886">
    <property type="term" value="C:plasma membrane"/>
    <property type="evidence" value="ECO:0007669"/>
    <property type="project" value="UniProtKB-SubCell"/>
</dbReference>
<dbReference type="GO" id="GO:0015087">
    <property type="term" value="F:cobalt ion transmembrane transporter activity"/>
    <property type="evidence" value="ECO:0007669"/>
    <property type="project" value="InterPro"/>
</dbReference>
<dbReference type="GO" id="GO:0015095">
    <property type="term" value="F:magnesium ion transmembrane transporter activity"/>
    <property type="evidence" value="ECO:0007669"/>
    <property type="project" value="InterPro"/>
</dbReference>
<dbReference type="GO" id="GO:0015099">
    <property type="term" value="F:nickel cation transmembrane transporter activity"/>
    <property type="evidence" value="ECO:0007669"/>
    <property type="project" value="TreeGrafter"/>
</dbReference>
<dbReference type="CDD" id="cd12835">
    <property type="entry name" value="EcCorA-like_1"/>
    <property type="match status" value="1"/>
</dbReference>
<dbReference type="FunFam" id="1.20.58.340:FF:000001">
    <property type="entry name" value="Magnesium transport protein CorA"/>
    <property type="match status" value="1"/>
</dbReference>
<dbReference type="Gene3D" id="1.20.58.340">
    <property type="entry name" value="Magnesium transport protein CorA, transmembrane region"/>
    <property type="match status" value="1"/>
</dbReference>
<dbReference type="InterPro" id="IPR045861">
    <property type="entry name" value="CorA_cytoplasmic_dom"/>
</dbReference>
<dbReference type="InterPro" id="IPR050829">
    <property type="entry name" value="CorA_MIT"/>
</dbReference>
<dbReference type="InterPro" id="IPR045863">
    <property type="entry name" value="CorA_TM1_TM2"/>
</dbReference>
<dbReference type="InterPro" id="IPR004488">
    <property type="entry name" value="Mg/Co-transport_prot_CorA"/>
</dbReference>
<dbReference type="InterPro" id="IPR002523">
    <property type="entry name" value="MgTranspt_CorA/ZnTranspt_ZntB"/>
</dbReference>
<dbReference type="NCBIfam" id="TIGR00383">
    <property type="entry name" value="corA"/>
    <property type="match status" value="1"/>
</dbReference>
<dbReference type="PANTHER" id="PTHR47685">
    <property type="entry name" value="MAGNESIUM TRANSPORT PROTEIN CORA"/>
    <property type="match status" value="1"/>
</dbReference>
<dbReference type="PANTHER" id="PTHR47685:SF1">
    <property type="entry name" value="MAGNESIUM TRANSPORT PROTEIN CORA"/>
    <property type="match status" value="1"/>
</dbReference>
<dbReference type="Pfam" id="PF01544">
    <property type="entry name" value="CorA"/>
    <property type="match status" value="1"/>
</dbReference>
<dbReference type="SUPFAM" id="SSF143865">
    <property type="entry name" value="CorA soluble domain-like"/>
    <property type="match status" value="1"/>
</dbReference>
<dbReference type="SUPFAM" id="SSF144083">
    <property type="entry name" value="Magnesium transport protein CorA, transmembrane region"/>
    <property type="match status" value="1"/>
</dbReference>
<reference key="1">
    <citation type="journal article" date="2005" name="J. Bacteriol.">
        <title>Genomic sequence of an otitis media isolate of nontypeable Haemophilus influenzae: comparative study with H. influenzae serotype d, strain KW20.</title>
        <authorList>
            <person name="Harrison A."/>
            <person name="Dyer D.W."/>
            <person name="Gillaspy A."/>
            <person name="Ray W.C."/>
            <person name="Mungur R."/>
            <person name="Carson M.B."/>
            <person name="Zhong H."/>
            <person name="Gipson J."/>
            <person name="Gipson M."/>
            <person name="Johnson L.S."/>
            <person name="Lewis L."/>
            <person name="Bakaletz L.O."/>
            <person name="Munson R.S. Jr."/>
        </authorList>
    </citation>
    <scope>NUCLEOTIDE SEQUENCE [LARGE SCALE GENOMIC DNA]</scope>
    <source>
        <strain>86-028NP</strain>
    </source>
</reference>
<evidence type="ECO:0000250" key="1">
    <source>
        <dbReference type="UniProtKB" id="P0ABI4"/>
    </source>
</evidence>
<evidence type="ECO:0000250" key="2">
    <source>
        <dbReference type="UniProtKB" id="Q9WZ31"/>
    </source>
</evidence>
<evidence type="ECO:0000255" key="3"/>
<evidence type="ECO:0000305" key="4"/>
<accession>Q4QLP6</accession>
<name>CORA_HAEI8</name>
<protein>
    <recommendedName>
        <fullName>Magnesium transport protein CorA</fullName>
    </recommendedName>
</protein>
<keyword id="KW-0997">Cell inner membrane</keyword>
<keyword id="KW-1003">Cell membrane</keyword>
<keyword id="KW-0406">Ion transport</keyword>
<keyword id="KW-0460">Magnesium</keyword>
<keyword id="KW-0472">Membrane</keyword>
<keyword id="KW-0812">Transmembrane</keyword>
<keyword id="KW-1133">Transmembrane helix</keyword>
<keyword id="KW-0813">Transport</keyword>
<feature type="chain" id="PRO_0000239095" description="Magnesium transport protein CorA">
    <location>
        <begin position="1"/>
        <end position="315"/>
    </location>
</feature>
<feature type="transmembrane region" description="Helical" evidence="3">
    <location>
        <begin position="257"/>
        <end position="277"/>
    </location>
</feature>
<feature type="transmembrane region" description="Helical" evidence="3">
    <location>
        <begin position="289"/>
        <end position="309"/>
    </location>
</feature>
<feature type="short sequence motif" description="Probable selectivity filter" evidence="2">
    <location>
        <begin position="276"/>
        <end position="278"/>
    </location>
</feature>
<feature type="site" description="Essential for ion permeation" evidence="2">
    <location>
        <position position="252"/>
    </location>
</feature>
<organism>
    <name type="scientific">Haemophilus influenzae (strain 86-028NP)</name>
    <dbReference type="NCBI Taxonomy" id="281310"/>
    <lineage>
        <taxon>Bacteria</taxon>
        <taxon>Pseudomonadati</taxon>
        <taxon>Pseudomonadota</taxon>
        <taxon>Gammaproteobacteria</taxon>
        <taxon>Pasteurellales</taxon>
        <taxon>Pasteurellaceae</taxon>
        <taxon>Haemophilus</taxon>
    </lineage>
</organism>
<gene>
    <name type="primary">corA</name>
    <name type="ordered locus">NTHI1195</name>
</gene>
<proteinExistence type="inferred from homology"/>
<sequence length="315" mass="36576">MINAFAINDSRLVRIDEDQTDLNTAIWLDLLEPTGEEREILQEGLGQSLASFLELEDIEASARFFEDEDGLHLHSFFYCEDEDNYADLASVAFTIRDGRLFTLRDRELPAFRLYRMRSRSQRLLECNSYEVLLDLFETKIEQLADVIENIYADLEELSRVILNGKQDEAFDEALNTLTEQEDTSSKVRLCLMDTQRALGFLVRKTRLPTNQLEQAREILRDIESLQPHNESLFQKVNFLMQAAMGYINIEQNKIMKFFSVVSVMFLPATLVASTYGMNFDFMPELHFKYGYPMAIGLMIAAALTPYIYFRRKGWL</sequence>